<evidence type="ECO:0000255" key="1">
    <source>
        <dbReference type="HAMAP-Rule" id="MF_00358"/>
    </source>
</evidence>
<evidence type="ECO:0000305" key="2"/>
<accession>Q4FN40</accession>
<feature type="chain" id="PRO_0000266721" description="Small ribosomal subunit protein bS21">
    <location>
        <begin position="1"/>
        <end position="64"/>
    </location>
</feature>
<name>RS21_PELUB</name>
<comment type="similarity">
    <text evidence="1">Belongs to the bacterial ribosomal protein bS21 family.</text>
</comment>
<sequence length="64" mass="7777">MKIEVKDNNIEQALRVLKRKLQRDGFFKVVKLKSVYEKPSEKKKRILQENIKRVKKLNKLKNRI</sequence>
<keyword id="KW-1185">Reference proteome</keyword>
<keyword id="KW-0687">Ribonucleoprotein</keyword>
<keyword id="KW-0689">Ribosomal protein</keyword>
<dbReference type="EMBL" id="CP000084">
    <property type="protein sequence ID" value="AAZ21399.1"/>
    <property type="molecule type" value="Genomic_DNA"/>
</dbReference>
<dbReference type="RefSeq" id="WP_006997326.1">
    <property type="nucleotide sequence ID" value="NC_007205.1"/>
</dbReference>
<dbReference type="SMR" id="Q4FN40"/>
<dbReference type="STRING" id="335992.SAR11_0578"/>
<dbReference type="GeneID" id="66295083"/>
<dbReference type="KEGG" id="pub:SAR11_0578"/>
<dbReference type="eggNOG" id="COG0828">
    <property type="taxonomic scope" value="Bacteria"/>
</dbReference>
<dbReference type="HOGENOM" id="CLU_159258_0_2_5"/>
<dbReference type="OrthoDB" id="9811907at2"/>
<dbReference type="Proteomes" id="UP000002528">
    <property type="component" value="Chromosome"/>
</dbReference>
<dbReference type="GO" id="GO:1990904">
    <property type="term" value="C:ribonucleoprotein complex"/>
    <property type="evidence" value="ECO:0007669"/>
    <property type="project" value="UniProtKB-KW"/>
</dbReference>
<dbReference type="GO" id="GO:0005840">
    <property type="term" value="C:ribosome"/>
    <property type="evidence" value="ECO:0007669"/>
    <property type="project" value="UniProtKB-KW"/>
</dbReference>
<dbReference type="GO" id="GO:0003735">
    <property type="term" value="F:structural constituent of ribosome"/>
    <property type="evidence" value="ECO:0007669"/>
    <property type="project" value="InterPro"/>
</dbReference>
<dbReference type="GO" id="GO:0006412">
    <property type="term" value="P:translation"/>
    <property type="evidence" value="ECO:0007669"/>
    <property type="project" value="UniProtKB-UniRule"/>
</dbReference>
<dbReference type="Gene3D" id="1.20.5.1150">
    <property type="entry name" value="Ribosomal protein S8"/>
    <property type="match status" value="1"/>
</dbReference>
<dbReference type="HAMAP" id="MF_00358">
    <property type="entry name" value="Ribosomal_bS21"/>
    <property type="match status" value="1"/>
</dbReference>
<dbReference type="InterPro" id="IPR001911">
    <property type="entry name" value="Ribosomal_bS21"/>
</dbReference>
<dbReference type="InterPro" id="IPR038380">
    <property type="entry name" value="Ribosomal_bS21_sf"/>
</dbReference>
<dbReference type="NCBIfam" id="TIGR00030">
    <property type="entry name" value="S21p"/>
    <property type="match status" value="1"/>
</dbReference>
<dbReference type="Pfam" id="PF01165">
    <property type="entry name" value="Ribosomal_S21"/>
    <property type="match status" value="1"/>
</dbReference>
<proteinExistence type="inferred from homology"/>
<gene>
    <name evidence="1" type="primary">rpsU</name>
    <name type="ordered locus">SAR11_0578</name>
</gene>
<reference key="1">
    <citation type="journal article" date="2005" name="Science">
        <title>Genome streamlining in a cosmopolitan oceanic bacterium.</title>
        <authorList>
            <person name="Giovannoni S.J."/>
            <person name="Tripp H.J."/>
            <person name="Givan S."/>
            <person name="Podar M."/>
            <person name="Vergin K.L."/>
            <person name="Baptista D."/>
            <person name="Bibbs L."/>
            <person name="Eads J."/>
            <person name="Richardson T.H."/>
            <person name="Noordewier M."/>
            <person name="Rappe M.S."/>
            <person name="Short J.M."/>
            <person name="Carrington J.C."/>
            <person name="Mathur E.J."/>
        </authorList>
    </citation>
    <scope>NUCLEOTIDE SEQUENCE [LARGE SCALE GENOMIC DNA]</scope>
    <source>
        <strain>HTCC1062</strain>
    </source>
</reference>
<protein>
    <recommendedName>
        <fullName evidence="1">Small ribosomal subunit protein bS21</fullName>
    </recommendedName>
    <alternativeName>
        <fullName evidence="2">30S ribosomal protein S21</fullName>
    </alternativeName>
</protein>
<organism>
    <name type="scientific">Pelagibacter ubique (strain HTCC1062)</name>
    <dbReference type="NCBI Taxonomy" id="335992"/>
    <lineage>
        <taxon>Bacteria</taxon>
        <taxon>Pseudomonadati</taxon>
        <taxon>Pseudomonadota</taxon>
        <taxon>Alphaproteobacteria</taxon>
        <taxon>Candidatus Pelagibacterales</taxon>
        <taxon>Candidatus Pelagibacteraceae</taxon>
        <taxon>Candidatus Pelagibacter</taxon>
    </lineage>
</organism>